<protein>
    <recommendedName>
        <fullName evidence="1">Ribosome maturation factor RimM</fullName>
    </recommendedName>
</protein>
<gene>
    <name evidence="1" type="primary">rimM</name>
    <name type="ordered locus">M6_Spy0674</name>
</gene>
<comment type="function">
    <text evidence="1">An accessory protein needed during the final step in the assembly of 30S ribosomal subunit, possibly for assembly of the head region. Essential for efficient processing of 16S rRNA. May be needed both before and after RbfA during the maturation of 16S rRNA. It has affinity for free ribosomal 30S subunits but not for 70S ribosomes.</text>
</comment>
<comment type="subunit">
    <text evidence="1">Binds ribosomal protein uS19.</text>
</comment>
<comment type="subcellular location">
    <subcellularLocation>
        <location evidence="1">Cytoplasm</location>
    </subcellularLocation>
</comment>
<comment type="domain">
    <text evidence="1">The PRC barrel domain binds ribosomal protein uS19.</text>
</comment>
<comment type="similarity">
    <text evidence="1">Belongs to the RimM family.</text>
</comment>
<sequence>MEYFNVGKIVNTQGLQGEMRVLSVSDFAEERFKKGSQLALFDDKDQFVQEVTIVSHRKQKNFDIIKFKDMYHINAIEKYKGYTLKVSKANQGDLQEGEFYYHQIIGMAVYEKDRLIGYVKEILQPGANDVWVVKRQGKRDLLLPYIPPVVLSVDVPNKRVDVELMEGLDDED</sequence>
<dbReference type="EMBL" id="CP000003">
    <property type="protein sequence ID" value="AAT86809.1"/>
    <property type="molecule type" value="Genomic_DNA"/>
</dbReference>
<dbReference type="RefSeq" id="WP_011184395.1">
    <property type="nucleotide sequence ID" value="NC_006086.1"/>
</dbReference>
<dbReference type="SMR" id="Q5XCQ4"/>
<dbReference type="KEGG" id="spa:M6_Spy0674"/>
<dbReference type="HOGENOM" id="CLU_077636_3_1_9"/>
<dbReference type="Proteomes" id="UP000001167">
    <property type="component" value="Chromosome"/>
</dbReference>
<dbReference type="GO" id="GO:0005737">
    <property type="term" value="C:cytoplasm"/>
    <property type="evidence" value="ECO:0007669"/>
    <property type="project" value="UniProtKB-SubCell"/>
</dbReference>
<dbReference type="GO" id="GO:0005840">
    <property type="term" value="C:ribosome"/>
    <property type="evidence" value="ECO:0007669"/>
    <property type="project" value="InterPro"/>
</dbReference>
<dbReference type="GO" id="GO:0043022">
    <property type="term" value="F:ribosome binding"/>
    <property type="evidence" value="ECO:0007669"/>
    <property type="project" value="InterPro"/>
</dbReference>
<dbReference type="GO" id="GO:0042274">
    <property type="term" value="P:ribosomal small subunit biogenesis"/>
    <property type="evidence" value="ECO:0007669"/>
    <property type="project" value="UniProtKB-UniRule"/>
</dbReference>
<dbReference type="GO" id="GO:0006364">
    <property type="term" value="P:rRNA processing"/>
    <property type="evidence" value="ECO:0007669"/>
    <property type="project" value="UniProtKB-UniRule"/>
</dbReference>
<dbReference type="Gene3D" id="2.30.30.240">
    <property type="entry name" value="PRC-barrel domain"/>
    <property type="match status" value="1"/>
</dbReference>
<dbReference type="Gene3D" id="2.40.30.60">
    <property type="entry name" value="RimM"/>
    <property type="match status" value="1"/>
</dbReference>
<dbReference type="HAMAP" id="MF_00014">
    <property type="entry name" value="Ribosome_mat_RimM"/>
    <property type="match status" value="1"/>
</dbReference>
<dbReference type="InterPro" id="IPR027275">
    <property type="entry name" value="PRC-brl_dom"/>
</dbReference>
<dbReference type="InterPro" id="IPR011033">
    <property type="entry name" value="PRC_barrel-like_sf"/>
</dbReference>
<dbReference type="InterPro" id="IPR011961">
    <property type="entry name" value="RimM"/>
</dbReference>
<dbReference type="InterPro" id="IPR002676">
    <property type="entry name" value="RimM_N"/>
</dbReference>
<dbReference type="InterPro" id="IPR036976">
    <property type="entry name" value="RimM_N_sf"/>
</dbReference>
<dbReference type="InterPro" id="IPR009000">
    <property type="entry name" value="Transl_B-barrel_sf"/>
</dbReference>
<dbReference type="NCBIfam" id="TIGR02273">
    <property type="entry name" value="16S_RimM"/>
    <property type="match status" value="1"/>
</dbReference>
<dbReference type="PANTHER" id="PTHR33692">
    <property type="entry name" value="RIBOSOME MATURATION FACTOR RIMM"/>
    <property type="match status" value="1"/>
</dbReference>
<dbReference type="PANTHER" id="PTHR33692:SF1">
    <property type="entry name" value="RIBOSOME MATURATION FACTOR RIMM"/>
    <property type="match status" value="1"/>
</dbReference>
<dbReference type="Pfam" id="PF05239">
    <property type="entry name" value="PRC"/>
    <property type="match status" value="1"/>
</dbReference>
<dbReference type="Pfam" id="PF01782">
    <property type="entry name" value="RimM"/>
    <property type="match status" value="1"/>
</dbReference>
<dbReference type="SUPFAM" id="SSF50346">
    <property type="entry name" value="PRC-barrel domain"/>
    <property type="match status" value="1"/>
</dbReference>
<dbReference type="SUPFAM" id="SSF50447">
    <property type="entry name" value="Translation proteins"/>
    <property type="match status" value="1"/>
</dbReference>
<organism>
    <name type="scientific">Streptococcus pyogenes serotype M6 (strain ATCC BAA-946 / MGAS10394)</name>
    <dbReference type="NCBI Taxonomy" id="286636"/>
    <lineage>
        <taxon>Bacteria</taxon>
        <taxon>Bacillati</taxon>
        <taxon>Bacillota</taxon>
        <taxon>Bacilli</taxon>
        <taxon>Lactobacillales</taxon>
        <taxon>Streptococcaceae</taxon>
        <taxon>Streptococcus</taxon>
    </lineage>
</organism>
<name>RIMM_STRP6</name>
<accession>Q5XCQ4</accession>
<reference key="1">
    <citation type="journal article" date="2004" name="J. Infect. Dis.">
        <title>Progress toward characterization of the group A Streptococcus metagenome: complete genome sequence of a macrolide-resistant serotype M6 strain.</title>
        <authorList>
            <person name="Banks D.J."/>
            <person name="Porcella S.F."/>
            <person name="Barbian K.D."/>
            <person name="Beres S.B."/>
            <person name="Philips L.E."/>
            <person name="Voyich J.M."/>
            <person name="DeLeo F.R."/>
            <person name="Martin J.M."/>
            <person name="Somerville G.A."/>
            <person name="Musser J.M."/>
        </authorList>
    </citation>
    <scope>NUCLEOTIDE SEQUENCE [LARGE SCALE GENOMIC DNA]</scope>
    <source>
        <strain>ATCC BAA-946 / MGAS10394</strain>
    </source>
</reference>
<evidence type="ECO:0000255" key="1">
    <source>
        <dbReference type="HAMAP-Rule" id="MF_00014"/>
    </source>
</evidence>
<feature type="chain" id="PRO_0000163369" description="Ribosome maturation factor RimM">
    <location>
        <begin position="1"/>
        <end position="172"/>
    </location>
</feature>
<feature type="domain" description="PRC barrel" evidence="1">
    <location>
        <begin position="96"/>
        <end position="168"/>
    </location>
</feature>
<proteinExistence type="inferred from homology"/>
<keyword id="KW-0143">Chaperone</keyword>
<keyword id="KW-0963">Cytoplasm</keyword>
<keyword id="KW-0690">Ribosome biogenesis</keyword>
<keyword id="KW-0698">rRNA processing</keyword>